<dbReference type="EC" id="5.1.1.7" evidence="1"/>
<dbReference type="EMBL" id="CP000453">
    <property type="protein sequence ID" value="ABI55418.1"/>
    <property type="molecule type" value="Genomic_DNA"/>
</dbReference>
<dbReference type="RefSeq" id="WP_011627814.1">
    <property type="nucleotide sequence ID" value="NC_008340.1"/>
</dbReference>
<dbReference type="SMR" id="Q0ACL9"/>
<dbReference type="KEGG" id="aeh:Mlg_0061"/>
<dbReference type="eggNOG" id="COG0253">
    <property type="taxonomic scope" value="Bacteria"/>
</dbReference>
<dbReference type="HOGENOM" id="CLU_053306_1_1_6"/>
<dbReference type="OrthoDB" id="9805408at2"/>
<dbReference type="UniPathway" id="UPA00034">
    <property type="reaction ID" value="UER00025"/>
</dbReference>
<dbReference type="Proteomes" id="UP000001962">
    <property type="component" value="Chromosome"/>
</dbReference>
<dbReference type="GO" id="GO:0005829">
    <property type="term" value="C:cytosol"/>
    <property type="evidence" value="ECO:0007669"/>
    <property type="project" value="TreeGrafter"/>
</dbReference>
<dbReference type="GO" id="GO:0008837">
    <property type="term" value="F:diaminopimelate epimerase activity"/>
    <property type="evidence" value="ECO:0007669"/>
    <property type="project" value="UniProtKB-UniRule"/>
</dbReference>
<dbReference type="GO" id="GO:0009089">
    <property type="term" value="P:lysine biosynthetic process via diaminopimelate"/>
    <property type="evidence" value="ECO:0007669"/>
    <property type="project" value="UniProtKB-UniRule"/>
</dbReference>
<dbReference type="FunFam" id="3.10.310.10:FF:000001">
    <property type="entry name" value="Diaminopimelate epimerase"/>
    <property type="match status" value="1"/>
</dbReference>
<dbReference type="FunFam" id="3.10.310.10:FF:000004">
    <property type="entry name" value="Diaminopimelate epimerase"/>
    <property type="match status" value="1"/>
</dbReference>
<dbReference type="Gene3D" id="3.10.310.10">
    <property type="entry name" value="Diaminopimelate Epimerase, Chain A, domain 1"/>
    <property type="match status" value="2"/>
</dbReference>
<dbReference type="HAMAP" id="MF_00197">
    <property type="entry name" value="DAP_epimerase"/>
    <property type="match status" value="1"/>
</dbReference>
<dbReference type="InterPro" id="IPR018510">
    <property type="entry name" value="DAP_epimerase_AS"/>
</dbReference>
<dbReference type="InterPro" id="IPR001653">
    <property type="entry name" value="DAP_epimerase_DapF"/>
</dbReference>
<dbReference type="NCBIfam" id="TIGR00652">
    <property type="entry name" value="DapF"/>
    <property type="match status" value="1"/>
</dbReference>
<dbReference type="PANTHER" id="PTHR31689:SF0">
    <property type="entry name" value="DIAMINOPIMELATE EPIMERASE"/>
    <property type="match status" value="1"/>
</dbReference>
<dbReference type="PANTHER" id="PTHR31689">
    <property type="entry name" value="DIAMINOPIMELATE EPIMERASE, CHLOROPLASTIC"/>
    <property type="match status" value="1"/>
</dbReference>
<dbReference type="Pfam" id="PF01678">
    <property type="entry name" value="DAP_epimerase"/>
    <property type="match status" value="2"/>
</dbReference>
<dbReference type="SUPFAM" id="SSF54506">
    <property type="entry name" value="Diaminopimelate epimerase-like"/>
    <property type="match status" value="1"/>
</dbReference>
<dbReference type="PROSITE" id="PS01326">
    <property type="entry name" value="DAP_EPIMERASE"/>
    <property type="match status" value="1"/>
</dbReference>
<accession>Q0ACL9</accession>
<reference key="1">
    <citation type="submission" date="2006-08" db="EMBL/GenBank/DDBJ databases">
        <title>Complete sequence of Alkalilimnicola ehrilichei MLHE-1.</title>
        <authorList>
            <person name="Copeland A."/>
            <person name="Lucas S."/>
            <person name="Lapidus A."/>
            <person name="Barry K."/>
            <person name="Detter J.C."/>
            <person name="Glavina del Rio T."/>
            <person name="Hammon N."/>
            <person name="Israni S."/>
            <person name="Dalin E."/>
            <person name="Tice H."/>
            <person name="Pitluck S."/>
            <person name="Sims D."/>
            <person name="Brettin T."/>
            <person name="Bruce D."/>
            <person name="Han C."/>
            <person name="Tapia R."/>
            <person name="Gilna P."/>
            <person name="Schmutz J."/>
            <person name="Larimer F."/>
            <person name="Land M."/>
            <person name="Hauser L."/>
            <person name="Kyrpides N."/>
            <person name="Mikhailova N."/>
            <person name="Oremland R.S."/>
            <person name="Hoeft S.E."/>
            <person name="Switzer-Blum J."/>
            <person name="Kulp T."/>
            <person name="King G."/>
            <person name="Tabita R."/>
            <person name="Witte B."/>
            <person name="Santini J.M."/>
            <person name="Basu P."/>
            <person name="Hollibaugh J.T."/>
            <person name="Xie G."/>
            <person name="Stolz J.F."/>
            <person name="Richardson P."/>
        </authorList>
    </citation>
    <scope>NUCLEOTIDE SEQUENCE [LARGE SCALE GENOMIC DNA]</scope>
    <source>
        <strain>ATCC BAA-1101 / DSM 17681 / MLHE-1</strain>
    </source>
</reference>
<feature type="chain" id="PRO_1000011832" description="Diaminopimelate epimerase">
    <location>
        <begin position="1"/>
        <end position="279"/>
    </location>
</feature>
<feature type="active site" description="Proton donor" evidence="1">
    <location>
        <position position="75"/>
    </location>
</feature>
<feature type="active site" description="Proton acceptor" evidence="1">
    <location>
        <position position="221"/>
    </location>
</feature>
<feature type="binding site" evidence="1">
    <location>
        <position position="13"/>
    </location>
    <ligand>
        <name>substrate</name>
    </ligand>
</feature>
<feature type="binding site" evidence="1">
    <location>
        <position position="46"/>
    </location>
    <ligand>
        <name>substrate</name>
    </ligand>
</feature>
<feature type="binding site" evidence="1">
    <location>
        <position position="66"/>
    </location>
    <ligand>
        <name>substrate</name>
    </ligand>
</feature>
<feature type="binding site" evidence="1">
    <location>
        <begin position="76"/>
        <end position="77"/>
    </location>
    <ligand>
        <name>substrate</name>
    </ligand>
</feature>
<feature type="binding site" evidence="1">
    <location>
        <position position="161"/>
    </location>
    <ligand>
        <name>substrate</name>
    </ligand>
</feature>
<feature type="binding site" evidence="1">
    <location>
        <position position="194"/>
    </location>
    <ligand>
        <name>substrate</name>
    </ligand>
</feature>
<feature type="binding site" evidence="1">
    <location>
        <begin position="212"/>
        <end position="213"/>
    </location>
    <ligand>
        <name>substrate</name>
    </ligand>
</feature>
<feature type="binding site" evidence="1">
    <location>
        <begin position="222"/>
        <end position="223"/>
    </location>
    <ligand>
        <name>substrate</name>
    </ligand>
</feature>
<feature type="site" description="Could be important to modulate the pK values of the two catalytic cysteine residues" evidence="1">
    <location>
        <position position="163"/>
    </location>
</feature>
<feature type="site" description="Could be important to modulate the pK values of the two catalytic cysteine residues" evidence="1">
    <location>
        <position position="212"/>
    </location>
</feature>
<feature type="site" description="Important for dimerization" evidence="1">
    <location>
        <position position="272"/>
    </location>
</feature>
<gene>
    <name evidence="1" type="primary">dapF</name>
    <name type="ordered locus">Mlg_0061</name>
</gene>
<sequence>MKVRFTKMQGLGNDFVVIDAVRQPVEPSPEQIRHIADRRYGVGCDQVLLATPARRSQADFGYLIFNPDGSQAEHCGNGVRCLARFLDDRGLVPAGRHELVIETINGLSRVRLCDDGPVTVDMGAPVLEPPHIPFRAPSRAREYELEVEGQVVRLGAVSMGNPHAVLRVDDVDSAPVETLGPAIESHSRFPRRVNVGFMQVLTPTHIRLRVYERGAGETLACGTGACAAVVSGRLRGWLEEAVDVDLPGGRLVIHWAGDGEHVWMTGPAETVFEGEIRLD</sequence>
<comment type="function">
    <text evidence="1">Catalyzes the stereoinversion of LL-2,6-diaminopimelate (L,L-DAP) to meso-diaminopimelate (meso-DAP), a precursor of L-lysine and an essential component of the bacterial peptidoglycan.</text>
</comment>
<comment type="catalytic activity">
    <reaction evidence="1">
        <text>(2S,6S)-2,6-diaminopimelate = meso-2,6-diaminopimelate</text>
        <dbReference type="Rhea" id="RHEA:15393"/>
        <dbReference type="ChEBI" id="CHEBI:57609"/>
        <dbReference type="ChEBI" id="CHEBI:57791"/>
        <dbReference type="EC" id="5.1.1.7"/>
    </reaction>
</comment>
<comment type="pathway">
    <text evidence="1">Amino-acid biosynthesis; L-lysine biosynthesis via DAP pathway; DL-2,6-diaminopimelate from LL-2,6-diaminopimelate: step 1/1.</text>
</comment>
<comment type="subunit">
    <text evidence="1">Homodimer.</text>
</comment>
<comment type="subcellular location">
    <subcellularLocation>
        <location evidence="1">Cytoplasm</location>
    </subcellularLocation>
</comment>
<comment type="similarity">
    <text evidence="1">Belongs to the diaminopimelate epimerase family.</text>
</comment>
<keyword id="KW-0028">Amino-acid biosynthesis</keyword>
<keyword id="KW-0963">Cytoplasm</keyword>
<keyword id="KW-0413">Isomerase</keyword>
<keyword id="KW-0457">Lysine biosynthesis</keyword>
<keyword id="KW-1185">Reference proteome</keyword>
<protein>
    <recommendedName>
        <fullName evidence="1">Diaminopimelate epimerase</fullName>
        <shortName evidence="1">DAP epimerase</shortName>
        <ecNumber evidence="1">5.1.1.7</ecNumber>
    </recommendedName>
    <alternativeName>
        <fullName evidence="1">PLP-independent amino acid racemase</fullName>
    </alternativeName>
</protein>
<evidence type="ECO:0000255" key="1">
    <source>
        <dbReference type="HAMAP-Rule" id="MF_00197"/>
    </source>
</evidence>
<proteinExistence type="inferred from homology"/>
<name>DAPF_ALKEH</name>
<organism>
    <name type="scientific">Alkalilimnicola ehrlichii (strain ATCC BAA-1101 / DSM 17681 / MLHE-1)</name>
    <dbReference type="NCBI Taxonomy" id="187272"/>
    <lineage>
        <taxon>Bacteria</taxon>
        <taxon>Pseudomonadati</taxon>
        <taxon>Pseudomonadota</taxon>
        <taxon>Gammaproteobacteria</taxon>
        <taxon>Chromatiales</taxon>
        <taxon>Ectothiorhodospiraceae</taxon>
        <taxon>Alkalilimnicola</taxon>
    </lineage>
</organism>